<gene>
    <name evidence="1" type="primary">metG</name>
    <name type="ordered locus">Xfasm12_1753</name>
</gene>
<protein>
    <recommendedName>
        <fullName evidence="1">Methionine--tRNA ligase</fullName>
        <ecNumber evidence="1">6.1.1.10</ecNumber>
    </recommendedName>
    <alternativeName>
        <fullName evidence="1">Methionyl-tRNA synthetase</fullName>
        <shortName evidence="1">MetRS</shortName>
    </alternativeName>
</protein>
<feature type="chain" id="PRO_1000093744" description="Methionine--tRNA ligase">
    <location>
        <begin position="1"/>
        <end position="702"/>
    </location>
</feature>
<feature type="domain" description="tRNA-binding" evidence="1">
    <location>
        <begin position="599"/>
        <end position="702"/>
    </location>
</feature>
<feature type="region of interest" description="Disordered" evidence="2">
    <location>
        <begin position="562"/>
        <end position="593"/>
    </location>
</feature>
<feature type="short sequence motif" description="'HIGH' region">
    <location>
        <begin position="23"/>
        <end position="33"/>
    </location>
</feature>
<feature type="short sequence motif" description="'KMSKS' region">
    <location>
        <begin position="341"/>
        <end position="345"/>
    </location>
</feature>
<feature type="compositionally biased region" description="Polar residues" evidence="2">
    <location>
        <begin position="569"/>
        <end position="578"/>
    </location>
</feature>
<feature type="binding site" evidence="1">
    <location>
        <position position="154"/>
    </location>
    <ligand>
        <name>Zn(2+)</name>
        <dbReference type="ChEBI" id="CHEBI:29105"/>
    </ligand>
</feature>
<feature type="binding site" evidence="1">
    <location>
        <position position="157"/>
    </location>
    <ligand>
        <name>Zn(2+)</name>
        <dbReference type="ChEBI" id="CHEBI:29105"/>
    </ligand>
</feature>
<feature type="binding site" evidence="1">
    <location>
        <position position="167"/>
    </location>
    <ligand>
        <name>Zn(2+)</name>
        <dbReference type="ChEBI" id="CHEBI:29105"/>
    </ligand>
</feature>
<feature type="binding site" evidence="1">
    <location>
        <position position="170"/>
    </location>
    <ligand>
        <name>Zn(2+)</name>
        <dbReference type="ChEBI" id="CHEBI:29105"/>
    </ligand>
</feature>
<feature type="binding site" evidence="1">
    <location>
        <position position="344"/>
    </location>
    <ligand>
        <name>ATP</name>
        <dbReference type="ChEBI" id="CHEBI:30616"/>
    </ligand>
</feature>
<keyword id="KW-0030">Aminoacyl-tRNA synthetase</keyword>
<keyword id="KW-0067">ATP-binding</keyword>
<keyword id="KW-0963">Cytoplasm</keyword>
<keyword id="KW-0436">Ligase</keyword>
<keyword id="KW-0479">Metal-binding</keyword>
<keyword id="KW-0547">Nucleotide-binding</keyword>
<keyword id="KW-0648">Protein biosynthesis</keyword>
<keyword id="KW-0694">RNA-binding</keyword>
<keyword id="KW-0820">tRNA-binding</keyword>
<keyword id="KW-0862">Zinc</keyword>
<sequence length="702" mass="77510">MRYSHPLVPLSFMTTALVTTALPYANGPLHLGHLVGYIQADIWVRARRLGGHNTWFVCADDTHGTPIMLAAEKAGMPPEAFIATTQASHERDFAAFNVAFDHYDSTHSPVNRHLTEQSYLTLKQAGHITCRSVAQFYDPAKGMFLPDRYVKGTCPNCGATDQYGDNCEACGATYDPTELKNPYSVISGATPELRDSEHFFFEVAHFDTFLRHWLSGDVALPSVKNKLKEWLDAKGGLRPWDISRDAPYFGFEIPDQPGKYFYVWLDAPIGYLCSFKTLCTRIGEDFDTHLRSGTTTELHHFIGKDIVNFHALFWPAVLHGTGRCAPTRLHVNGYLTVDGAKMSKSRGTFIMARTYLDAGLEPDALRYYFAAKSSGDVDDLDLNLSDFVARVNADLVGKLVNLASRCASFIGTRFNGQLADILPDRIQYDQFVAALTPIRDAYERNDTASAIRQTMQLADEANKYIDETKPWIIAKQHHADAQLHAVCTQGLNLFRVLITALKPILPHTSIQAETFLAAPVTTWQDVNQPLTGGHTIQPYSPLFTRIDKKIIEVMINASKDTLAPPPASAKQQNASMSNTAPPPTAEEPETTAPTIGIDDFAKLDLRIGKVLVCEYVEGSDKLLRFELDAGPLGKRQIFSGIRASYSNPETLIGRNVVFIANLAPRKMRFGISQGMILSAGFDSGTLALLDADSSAQPGMPVR</sequence>
<evidence type="ECO:0000255" key="1">
    <source>
        <dbReference type="HAMAP-Rule" id="MF_00098"/>
    </source>
</evidence>
<evidence type="ECO:0000256" key="2">
    <source>
        <dbReference type="SAM" id="MobiDB-lite"/>
    </source>
</evidence>
<dbReference type="EC" id="6.1.1.10" evidence="1"/>
<dbReference type="EMBL" id="CP000941">
    <property type="protein sequence ID" value="ACA12651.1"/>
    <property type="molecule type" value="Genomic_DNA"/>
</dbReference>
<dbReference type="SMR" id="B0U472"/>
<dbReference type="KEGG" id="xfm:Xfasm12_1753"/>
<dbReference type="HOGENOM" id="CLU_009710_7_0_6"/>
<dbReference type="GO" id="GO:0005829">
    <property type="term" value="C:cytosol"/>
    <property type="evidence" value="ECO:0007669"/>
    <property type="project" value="TreeGrafter"/>
</dbReference>
<dbReference type="GO" id="GO:0005524">
    <property type="term" value="F:ATP binding"/>
    <property type="evidence" value="ECO:0007669"/>
    <property type="project" value="UniProtKB-UniRule"/>
</dbReference>
<dbReference type="GO" id="GO:0046872">
    <property type="term" value="F:metal ion binding"/>
    <property type="evidence" value="ECO:0007669"/>
    <property type="project" value="UniProtKB-KW"/>
</dbReference>
<dbReference type="GO" id="GO:0004825">
    <property type="term" value="F:methionine-tRNA ligase activity"/>
    <property type="evidence" value="ECO:0007669"/>
    <property type="project" value="UniProtKB-UniRule"/>
</dbReference>
<dbReference type="GO" id="GO:0000049">
    <property type="term" value="F:tRNA binding"/>
    <property type="evidence" value="ECO:0007669"/>
    <property type="project" value="UniProtKB-KW"/>
</dbReference>
<dbReference type="GO" id="GO:0006431">
    <property type="term" value="P:methionyl-tRNA aminoacylation"/>
    <property type="evidence" value="ECO:0007669"/>
    <property type="project" value="UniProtKB-UniRule"/>
</dbReference>
<dbReference type="CDD" id="cd07957">
    <property type="entry name" value="Anticodon_Ia_Met"/>
    <property type="match status" value="1"/>
</dbReference>
<dbReference type="CDD" id="cd00814">
    <property type="entry name" value="MetRS_core"/>
    <property type="match status" value="1"/>
</dbReference>
<dbReference type="CDD" id="cd02800">
    <property type="entry name" value="tRNA_bind_EcMetRS_like"/>
    <property type="match status" value="1"/>
</dbReference>
<dbReference type="FunFam" id="1.10.730.10:FF:000005">
    <property type="entry name" value="Methionine--tRNA ligase"/>
    <property type="match status" value="1"/>
</dbReference>
<dbReference type="FunFam" id="2.20.28.20:FF:000001">
    <property type="entry name" value="Methionine--tRNA ligase"/>
    <property type="match status" value="1"/>
</dbReference>
<dbReference type="FunFam" id="2.40.50.140:FF:000042">
    <property type="entry name" value="Methionine--tRNA ligase"/>
    <property type="match status" value="1"/>
</dbReference>
<dbReference type="Gene3D" id="3.40.50.620">
    <property type="entry name" value="HUPs"/>
    <property type="match status" value="1"/>
</dbReference>
<dbReference type="Gene3D" id="1.10.730.10">
    <property type="entry name" value="Isoleucyl-tRNA Synthetase, Domain 1"/>
    <property type="match status" value="1"/>
</dbReference>
<dbReference type="Gene3D" id="2.20.28.20">
    <property type="entry name" value="Methionyl-tRNA synthetase, Zn-domain"/>
    <property type="match status" value="1"/>
</dbReference>
<dbReference type="Gene3D" id="2.40.50.140">
    <property type="entry name" value="Nucleic acid-binding proteins"/>
    <property type="match status" value="1"/>
</dbReference>
<dbReference type="HAMAP" id="MF_00098">
    <property type="entry name" value="Met_tRNA_synth_type1"/>
    <property type="match status" value="1"/>
</dbReference>
<dbReference type="InterPro" id="IPR001412">
    <property type="entry name" value="aa-tRNA-synth_I_CS"/>
</dbReference>
<dbReference type="InterPro" id="IPR041872">
    <property type="entry name" value="Anticodon_Met"/>
</dbReference>
<dbReference type="InterPro" id="IPR004495">
    <property type="entry name" value="Met-tRNA-synth_bsu_C"/>
</dbReference>
<dbReference type="InterPro" id="IPR023458">
    <property type="entry name" value="Met-tRNA_ligase_1"/>
</dbReference>
<dbReference type="InterPro" id="IPR014758">
    <property type="entry name" value="Met-tRNA_synth"/>
</dbReference>
<dbReference type="InterPro" id="IPR015413">
    <property type="entry name" value="Methionyl/Leucyl_tRNA_Synth"/>
</dbReference>
<dbReference type="InterPro" id="IPR033911">
    <property type="entry name" value="MetRS_core"/>
</dbReference>
<dbReference type="InterPro" id="IPR029038">
    <property type="entry name" value="MetRS_Zn"/>
</dbReference>
<dbReference type="InterPro" id="IPR012340">
    <property type="entry name" value="NA-bd_OB-fold"/>
</dbReference>
<dbReference type="InterPro" id="IPR014729">
    <property type="entry name" value="Rossmann-like_a/b/a_fold"/>
</dbReference>
<dbReference type="InterPro" id="IPR002547">
    <property type="entry name" value="tRNA-bd_dom"/>
</dbReference>
<dbReference type="InterPro" id="IPR009080">
    <property type="entry name" value="tRNAsynth_Ia_anticodon-bd"/>
</dbReference>
<dbReference type="NCBIfam" id="TIGR00398">
    <property type="entry name" value="metG"/>
    <property type="match status" value="1"/>
</dbReference>
<dbReference type="NCBIfam" id="TIGR00399">
    <property type="entry name" value="metG_C_term"/>
    <property type="match status" value="1"/>
</dbReference>
<dbReference type="NCBIfam" id="NF001100">
    <property type="entry name" value="PRK00133.1"/>
    <property type="match status" value="1"/>
</dbReference>
<dbReference type="PANTHER" id="PTHR45765">
    <property type="entry name" value="METHIONINE--TRNA LIGASE"/>
    <property type="match status" value="1"/>
</dbReference>
<dbReference type="PANTHER" id="PTHR45765:SF1">
    <property type="entry name" value="METHIONINE--TRNA LIGASE, CYTOPLASMIC"/>
    <property type="match status" value="1"/>
</dbReference>
<dbReference type="Pfam" id="PF19303">
    <property type="entry name" value="Anticodon_3"/>
    <property type="match status" value="1"/>
</dbReference>
<dbReference type="Pfam" id="PF09334">
    <property type="entry name" value="tRNA-synt_1g"/>
    <property type="match status" value="1"/>
</dbReference>
<dbReference type="Pfam" id="PF01588">
    <property type="entry name" value="tRNA_bind"/>
    <property type="match status" value="1"/>
</dbReference>
<dbReference type="PRINTS" id="PR01041">
    <property type="entry name" value="TRNASYNTHMET"/>
</dbReference>
<dbReference type="SUPFAM" id="SSF47323">
    <property type="entry name" value="Anticodon-binding domain of a subclass of class I aminoacyl-tRNA synthetases"/>
    <property type="match status" value="1"/>
</dbReference>
<dbReference type="SUPFAM" id="SSF57770">
    <property type="entry name" value="Methionyl-tRNA synthetase (MetRS), Zn-domain"/>
    <property type="match status" value="1"/>
</dbReference>
<dbReference type="SUPFAM" id="SSF50249">
    <property type="entry name" value="Nucleic acid-binding proteins"/>
    <property type="match status" value="1"/>
</dbReference>
<dbReference type="SUPFAM" id="SSF52374">
    <property type="entry name" value="Nucleotidylyl transferase"/>
    <property type="match status" value="1"/>
</dbReference>
<dbReference type="PROSITE" id="PS00178">
    <property type="entry name" value="AA_TRNA_LIGASE_I"/>
    <property type="match status" value="1"/>
</dbReference>
<dbReference type="PROSITE" id="PS50886">
    <property type="entry name" value="TRBD"/>
    <property type="match status" value="1"/>
</dbReference>
<proteinExistence type="inferred from homology"/>
<accession>B0U472</accession>
<comment type="function">
    <text evidence="1">Is required not only for elongation of protein synthesis but also for the initiation of all mRNA translation through initiator tRNA(fMet) aminoacylation.</text>
</comment>
<comment type="catalytic activity">
    <reaction evidence="1">
        <text>tRNA(Met) + L-methionine + ATP = L-methionyl-tRNA(Met) + AMP + diphosphate</text>
        <dbReference type="Rhea" id="RHEA:13481"/>
        <dbReference type="Rhea" id="RHEA-COMP:9667"/>
        <dbReference type="Rhea" id="RHEA-COMP:9698"/>
        <dbReference type="ChEBI" id="CHEBI:30616"/>
        <dbReference type="ChEBI" id="CHEBI:33019"/>
        <dbReference type="ChEBI" id="CHEBI:57844"/>
        <dbReference type="ChEBI" id="CHEBI:78442"/>
        <dbReference type="ChEBI" id="CHEBI:78530"/>
        <dbReference type="ChEBI" id="CHEBI:456215"/>
        <dbReference type="EC" id="6.1.1.10"/>
    </reaction>
</comment>
<comment type="cofactor">
    <cofactor evidence="1">
        <name>Zn(2+)</name>
        <dbReference type="ChEBI" id="CHEBI:29105"/>
    </cofactor>
    <text evidence="1">Binds 1 zinc ion per subunit.</text>
</comment>
<comment type="subunit">
    <text evidence="1">Homodimer.</text>
</comment>
<comment type="subcellular location">
    <subcellularLocation>
        <location evidence="1">Cytoplasm</location>
    </subcellularLocation>
</comment>
<comment type="similarity">
    <text evidence="1">Belongs to the class-I aminoacyl-tRNA synthetase family. MetG type 1 subfamily.</text>
</comment>
<name>SYM_XYLFM</name>
<reference key="1">
    <citation type="journal article" date="2010" name="J. Bacteriol.">
        <title>Whole genome sequences of two Xylella fastidiosa strains (M12 and M23) causing almond leaf scorch disease in California.</title>
        <authorList>
            <person name="Chen J."/>
            <person name="Xie G."/>
            <person name="Han S."/>
            <person name="Chertkov O."/>
            <person name="Sims D."/>
            <person name="Civerolo E.L."/>
        </authorList>
    </citation>
    <scope>NUCLEOTIDE SEQUENCE [LARGE SCALE GENOMIC DNA]</scope>
    <source>
        <strain>M12</strain>
    </source>
</reference>
<organism>
    <name type="scientific">Xylella fastidiosa (strain M12)</name>
    <dbReference type="NCBI Taxonomy" id="405440"/>
    <lineage>
        <taxon>Bacteria</taxon>
        <taxon>Pseudomonadati</taxon>
        <taxon>Pseudomonadota</taxon>
        <taxon>Gammaproteobacteria</taxon>
        <taxon>Lysobacterales</taxon>
        <taxon>Lysobacteraceae</taxon>
        <taxon>Xylella</taxon>
    </lineage>
</organism>